<organism>
    <name type="scientific">Candida albicans (strain SC5314 / ATCC MYA-2876)</name>
    <name type="common">Yeast</name>
    <dbReference type="NCBI Taxonomy" id="237561"/>
    <lineage>
        <taxon>Eukaryota</taxon>
        <taxon>Fungi</taxon>
        <taxon>Dikarya</taxon>
        <taxon>Ascomycota</taxon>
        <taxon>Saccharomycotina</taxon>
        <taxon>Pichiomycetes</taxon>
        <taxon>Debaryomycetaceae</taxon>
        <taxon>Candida/Lodderomyces clade</taxon>
        <taxon>Candida</taxon>
    </lineage>
</organism>
<dbReference type="EMBL" id="CP017623">
    <property type="protein sequence ID" value="AOW26269.1"/>
    <property type="molecule type" value="Genomic_DNA"/>
</dbReference>
<dbReference type="RefSeq" id="XP_019330656.1">
    <property type="nucleotide sequence ID" value="XM_019475111.1"/>
</dbReference>
<dbReference type="SMR" id="A0A1D8PDP8"/>
<dbReference type="FunCoup" id="A0A1D8PDP8">
    <property type="interactions" value="118"/>
</dbReference>
<dbReference type="STRING" id="237561.A0A1D8PDP8"/>
<dbReference type="EnsemblFungi" id="C1_06050C_A-T">
    <property type="protein sequence ID" value="C1_06050C_A-T-p1"/>
    <property type="gene ID" value="C1_06050C_A"/>
</dbReference>
<dbReference type="GeneID" id="30515003"/>
<dbReference type="KEGG" id="cal:CAALFM_C106050CA"/>
<dbReference type="CGD" id="CAL0000182541">
    <property type="gene designation" value="QCR10"/>
</dbReference>
<dbReference type="VEuPathDB" id="FungiDB:C1_06050C_A"/>
<dbReference type="eggNOG" id="ENOG502S83P">
    <property type="taxonomic scope" value="Eukaryota"/>
</dbReference>
<dbReference type="InParanoid" id="A0A1D8PDP8"/>
<dbReference type="OMA" id="VFTEGWP"/>
<dbReference type="OrthoDB" id="2391627at2759"/>
<dbReference type="Proteomes" id="UP000000559">
    <property type="component" value="Chromosome 1"/>
</dbReference>
<dbReference type="GO" id="GO:0005743">
    <property type="term" value="C:mitochondrial inner membrane"/>
    <property type="evidence" value="ECO:0007669"/>
    <property type="project" value="UniProtKB-SubCell"/>
</dbReference>
<dbReference type="GO" id="GO:0045275">
    <property type="term" value="C:respiratory chain complex III"/>
    <property type="evidence" value="ECO:0007669"/>
    <property type="project" value="EnsemblFungi"/>
</dbReference>
<dbReference type="GO" id="GO:0008121">
    <property type="term" value="F:ubiquinol-cytochrome-c reductase activity"/>
    <property type="evidence" value="ECO:0007669"/>
    <property type="project" value="EnsemblFungi"/>
</dbReference>
<dbReference type="GO" id="GO:0006122">
    <property type="term" value="P:mitochondrial electron transport, ubiquinol to cytochrome c"/>
    <property type="evidence" value="ECO:0000318"/>
    <property type="project" value="GO_Central"/>
</dbReference>
<dbReference type="InterPro" id="IPR019182">
    <property type="entry name" value="Cytochrome_b-c1_su10_fun"/>
</dbReference>
<dbReference type="InterPro" id="IPR029027">
    <property type="entry name" value="Single_a-helix_sf"/>
</dbReference>
<dbReference type="PANTHER" id="PTHR28254">
    <property type="entry name" value="CYTOCHROME B-C1 COMPLEX SUBUNIT 10"/>
    <property type="match status" value="1"/>
</dbReference>
<dbReference type="PANTHER" id="PTHR28254:SF1">
    <property type="entry name" value="CYTOCHROME B-C1 COMPLEX SUBUNIT 10, MITOCHONDRIAL"/>
    <property type="match status" value="1"/>
</dbReference>
<dbReference type="Pfam" id="PF09796">
    <property type="entry name" value="QCR10"/>
    <property type="match status" value="1"/>
</dbReference>
<dbReference type="SUPFAM" id="SSF81518">
    <property type="entry name" value="Subunit XI (6.4 kDa protein) of cytochrome bc1 complex (Ubiquinol-cytochrome c reductase)"/>
    <property type="match status" value="1"/>
</dbReference>
<reference key="1">
    <citation type="journal article" date="2004" name="Proc. Natl. Acad. Sci. U.S.A.">
        <title>The diploid genome sequence of Candida albicans.</title>
        <authorList>
            <person name="Jones T."/>
            <person name="Federspiel N.A."/>
            <person name="Chibana H."/>
            <person name="Dungan J."/>
            <person name="Kalman S."/>
            <person name="Magee B.B."/>
            <person name="Newport G."/>
            <person name="Thorstenson Y.R."/>
            <person name="Agabian N."/>
            <person name="Magee P.T."/>
            <person name="Davis R.W."/>
            <person name="Scherer S."/>
        </authorList>
    </citation>
    <scope>NUCLEOTIDE SEQUENCE [LARGE SCALE GENOMIC DNA]</scope>
    <source>
        <strain>SC5314 / ATCC MYA-2876</strain>
    </source>
</reference>
<reference key="2">
    <citation type="journal article" date="2007" name="Genome Biol.">
        <title>Assembly of the Candida albicans genome into sixteen supercontigs aligned on the eight chromosomes.</title>
        <authorList>
            <person name="van het Hoog M."/>
            <person name="Rast T.J."/>
            <person name="Martchenko M."/>
            <person name="Grindle S."/>
            <person name="Dignard D."/>
            <person name="Hogues H."/>
            <person name="Cuomo C."/>
            <person name="Berriman M."/>
            <person name="Scherer S."/>
            <person name="Magee B.B."/>
            <person name="Whiteway M."/>
            <person name="Chibana H."/>
            <person name="Nantel A."/>
            <person name="Magee P.T."/>
        </authorList>
    </citation>
    <scope>GENOME REANNOTATION</scope>
    <source>
        <strain>SC5314 / ATCC MYA-2876</strain>
    </source>
</reference>
<reference key="3">
    <citation type="journal article" date="2013" name="Genome Biol.">
        <title>Assembly of a phased diploid Candida albicans genome facilitates allele-specific measurements and provides a simple model for repeat and indel structure.</title>
        <authorList>
            <person name="Muzzey D."/>
            <person name="Schwartz K."/>
            <person name="Weissman J.S."/>
            <person name="Sherlock G."/>
        </authorList>
    </citation>
    <scope>NUCLEOTIDE SEQUENCE [LARGE SCALE GENOMIC DNA]</scope>
    <scope>GENOME REANNOTATION</scope>
    <source>
        <strain>SC5314 / ATCC MYA-2876</strain>
    </source>
</reference>
<reference key="4">
    <citation type="journal article" date="2005" name="Antimicrob. Agents Chemother.">
        <title>Genome-wide expression profiling of the response to azole, polyene, echinocandin, and pyrimidine antifungal agents in Candida albicans.</title>
        <authorList>
            <person name="Liu T.T."/>
            <person name="Lee R.E."/>
            <person name="Barker K.S."/>
            <person name="Lee R.E."/>
            <person name="Wei L."/>
            <person name="Homayouni R."/>
            <person name="Rogers P.D."/>
        </authorList>
    </citation>
    <scope>INDUCTION</scope>
</reference>
<reference key="5">
    <citation type="journal article" date="2005" name="Mol. Biol. Cell">
        <title>Transcriptional response of Candida albicans to nitric oxide and the role of the YHB1 gene in nitrosative stress and virulence.</title>
        <authorList>
            <person name="Hromatka B.S."/>
            <person name="Noble S.M."/>
            <person name="Johnson A.D."/>
        </authorList>
    </citation>
    <scope>INDUCTION</scope>
</reference>
<reference key="6">
    <citation type="journal article" date="2011" name="J. Biol. Chem.">
        <title>Cap2-HAP complex is a critical transcriptional regulator that has dual but contrasting roles in regulation of iron homeostasis in Candida albicans.</title>
        <authorList>
            <person name="Singh R.P."/>
            <person name="Prasad H.K."/>
            <person name="Sinha I."/>
            <person name="Agarwal N."/>
            <person name="Natarajan K."/>
        </authorList>
    </citation>
    <scope>INDUCTION</scope>
</reference>
<reference key="7">
    <citation type="journal article" date="2012" name="Cell">
        <title>A recently evolved transcriptional network controls biofilm development in Candida albicans.</title>
        <authorList>
            <person name="Nobile C.J."/>
            <person name="Fox E.P."/>
            <person name="Nett J.E."/>
            <person name="Sorrells T.R."/>
            <person name="Mitrovich Q.M."/>
            <person name="Hernday A.D."/>
            <person name="Tuch B.B."/>
            <person name="Andes D.R."/>
            <person name="Johnson A.D."/>
        </authorList>
    </citation>
    <scope>INDUCTION</scope>
</reference>
<reference key="8">
    <citation type="journal article" date="2023" name="Front. Cell. Infect. Microbiol.">
        <title>QCR7 affects the virulence of Candida albicans and the uptake of multiple carbon sources present in different host niches.</title>
        <authorList>
            <person name="Zeng L."/>
            <person name="Huang Y."/>
            <person name="Tan J."/>
            <person name="Peng J."/>
            <person name="Hu N."/>
            <person name="Liu Q."/>
            <person name="Cao Y."/>
            <person name="Zhang Y."/>
            <person name="Chen J."/>
            <person name="Huang X."/>
        </authorList>
    </citation>
    <scope>FUNCTION</scope>
    <scope>DISRUPTION PHENOTYPE</scope>
</reference>
<comment type="function">
    <text evidence="3">Component of the ubiquinol-cytochrome c oxidoreductase, a multisubunit transmembrane complex that is part of the mitochondrial electron transport chain which drives oxidative phosphorylation (PubMed:36923588). The complex plays an important role in the uptake of multiple carbon sources present in different host niches (PubMed:36923588).</text>
</comment>
<comment type="subunit">
    <text evidence="6">Component of the ubiquinol-cytochrome c oxidoreductase (cytochrome b-c1 complex, complex III, CIII), a multisubunit enzyme composed of 10 subunits. The complex is composed of 3 respiratory subunits cytochrome b (COB), cytochrome c1 (CYT1) and Rieske protein (RIP1), 2 core protein subunits COR1 and QCR2, and 5 low-molecular weight protein subunits QCR6, QCR7, QCR8, QCR9 and QCR10. The complex exists as an obligatory dimer and forms supercomplexes (SCs) in the inner mitochondrial membrane with a monomer or a dimer of cytochrome c oxidase (complex IV, CIV), resulting in 2 different assemblies (supercomplexes III(2)IV and III(2)IV(2)).</text>
</comment>
<comment type="subcellular location">
    <subcellularLocation>
        <location evidence="1">Mitochondrion inner membrane</location>
        <topology evidence="2">Single-pass membrane protein</topology>
    </subcellularLocation>
</comment>
<comment type="disruption phenotype">
    <text evidence="3">Leads to decreased vegetative growth on several carbon sources such as citrate.</text>
</comment>
<comment type="similarity">
    <text evidence="5">Belongs to the UQCR11/QCR10 family.</text>
</comment>
<keyword id="KW-0249">Electron transport</keyword>
<keyword id="KW-0472">Membrane</keyword>
<keyword id="KW-0496">Mitochondrion</keyword>
<keyword id="KW-0999">Mitochondrion inner membrane</keyword>
<keyword id="KW-1185">Reference proteome</keyword>
<keyword id="KW-0679">Respiratory chain</keyword>
<keyword id="KW-0812">Transmembrane</keyword>
<keyword id="KW-1133">Transmembrane helix</keyword>
<keyword id="KW-0813">Transport</keyword>
<sequence>MVSYVKGPAYKALSHFGKLNAPLVRSYIPNLVFWGAAAGGAVATFTEGVPLFQKTFYEKIPFFGQHWIYNPDPEDVPV</sequence>
<gene>
    <name evidence="4" type="primary">QCR10</name>
    <name evidence="8" type="ordered locus">CAALFM_C106050CA</name>
    <name evidence="7" type="ordered locus">orf19.2439.1</name>
</gene>
<evidence type="ECO:0000250" key="1">
    <source>
        <dbReference type="UniProtKB" id="P37299"/>
    </source>
</evidence>
<evidence type="ECO:0000255" key="2"/>
<evidence type="ECO:0000269" key="3">
    <source>
    </source>
</evidence>
<evidence type="ECO:0000303" key="4">
    <source>
    </source>
</evidence>
<evidence type="ECO:0000305" key="5"/>
<evidence type="ECO:0000305" key="6">
    <source>
    </source>
</evidence>
<evidence type="ECO:0000312" key="7">
    <source>
        <dbReference type="CGD" id="CAL0000182541"/>
    </source>
</evidence>
<evidence type="ECO:0000312" key="8">
    <source>
        <dbReference type="EMBL" id="AOW26269.1"/>
    </source>
</evidence>
<name>QCR10_CANAL</name>
<proteinExistence type="evidence at transcript level"/>
<feature type="chain" id="PRO_0000459234" description="Cytochrome b-c1 complex subunit 10, mitochondrial">
    <location>
        <begin position="1"/>
        <end position="78"/>
    </location>
</feature>
<feature type="topological domain" description="Mitochondrial matrix" evidence="1">
    <location>
        <begin position="1"/>
        <end position="26"/>
    </location>
</feature>
<feature type="transmembrane region" description="Helical" evidence="2">
    <location>
        <begin position="27"/>
        <end position="46"/>
    </location>
</feature>
<feature type="topological domain" description="Mitochondrial intermembrane" evidence="1">
    <location>
        <begin position="47"/>
        <end position="78"/>
    </location>
</feature>
<protein>
    <recommendedName>
        <fullName evidence="4">Cytochrome b-c1 complex subunit 10, mitochondrial</fullName>
    </recommendedName>
    <alternativeName>
        <fullName evidence="4">Complex III subunit 10</fullName>
    </alternativeName>
</protein>
<accession>A0A1D8PDP8</accession>